<gene>
    <name evidence="1" type="primary">thiM</name>
    <name type="ordered locus">BTH_II1271</name>
</gene>
<sequence>MESINWNTRSVREELAAVKRAAPFVYGLTNYVAANLSANVLLAVGAAPAIGAAADWPARFGAGAGALWINTAALMSSGADTLRTAARAASETGTRWVLDPVATGAGAPEYDAIVQELLAFRPSVIRGNASELIALAGGTAAGKGVDTTASSDSALAYIGDLARRSGAVVAVSGPIDYVTDGIDTLAIAGGDARLTRVTGAGCALGALIAALLAQRGAALAAAAAAHAIYAIAAERAADARGTGSFAVRFVDELSLLDPGE</sequence>
<protein>
    <recommendedName>
        <fullName evidence="1">Hydroxyethylthiazole kinase</fullName>
        <ecNumber evidence="1">2.7.1.50</ecNumber>
    </recommendedName>
    <alternativeName>
        <fullName evidence="1">4-methyl-5-beta-hydroxyethylthiazole kinase</fullName>
        <shortName evidence="1">TH kinase</shortName>
        <shortName evidence="1">Thz kinase</shortName>
    </alternativeName>
</protein>
<reference key="1">
    <citation type="journal article" date="2005" name="BMC Genomics">
        <title>Bacterial genome adaptation to niches: divergence of the potential virulence genes in three Burkholderia species of different survival strategies.</title>
        <authorList>
            <person name="Kim H.S."/>
            <person name="Schell M.A."/>
            <person name="Yu Y."/>
            <person name="Ulrich R.L."/>
            <person name="Sarria S.H."/>
            <person name="Nierman W.C."/>
            <person name="DeShazer D."/>
        </authorList>
    </citation>
    <scope>NUCLEOTIDE SEQUENCE [LARGE SCALE GENOMIC DNA]</scope>
    <source>
        <strain>ATCC 700388 / DSM 13276 / CCUG 48851 / CIP 106301 / E264</strain>
    </source>
</reference>
<accession>Q2T5T2</accession>
<keyword id="KW-0067">ATP-binding</keyword>
<keyword id="KW-0418">Kinase</keyword>
<keyword id="KW-0460">Magnesium</keyword>
<keyword id="KW-0479">Metal-binding</keyword>
<keyword id="KW-0547">Nucleotide-binding</keyword>
<keyword id="KW-0784">Thiamine biosynthesis</keyword>
<keyword id="KW-0808">Transferase</keyword>
<proteinExistence type="inferred from homology"/>
<name>THIM_BURTA</name>
<organism>
    <name type="scientific">Burkholderia thailandensis (strain ATCC 700388 / DSM 13276 / CCUG 48851 / CIP 106301 / E264)</name>
    <dbReference type="NCBI Taxonomy" id="271848"/>
    <lineage>
        <taxon>Bacteria</taxon>
        <taxon>Pseudomonadati</taxon>
        <taxon>Pseudomonadota</taxon>
        <taxon>Betaproteobacteria</taxon>
        <taxon>Burkholderiales</taxon>
        <taxon>Burkholderiaceae</taxon>
        <taxon>Burkholderia</taxon>
        <taxon>pseudomallei group</taxon>
    </lineage>
</organism>
<feature type="chain" id="PRO_0000383830" description="Hydroxyethylthiazole kinase">
    <location>
        <begin position="1"/>
        <end position="260"/>
    </location>
</feature>
<feature type="binding site" evidence="1">
    <location>
        <position position="126"/>
    </location>
    <ligand>
        <name>ATP</name>
        <dbReference type="ChEBI" id="CHEBI:30616"/>
    </ligand>
</feature>
<feature type="binding site" evidence="1">
    <location>
        <position position="172"/>
    </location>
    <ligand>
        <name>ATP</name>
        <dbReference type="ChEBI" id="CHEBI:30616"/>
    </ligand>
</feature>
<feature type="binding site" evidence="1">
    <location>
        <position position="199"/>
    </location>
    <ligand>
        <name>substrate</name>
    </ligand>
</feature>
<comment type="function">
    <text evidence="1">Catalyzes the phosphorylation of the hydroxyl group of 4-methyl-5-beta-hydroxyethylthiazole (THZ).</text>
</comment>
<comment type="catalytic activity">
    <reaction evidence="1">
        <text>5-(2-hydroxyethyl)-4-methylthiazole + ATP = 4-methyl-5-(2-phosphooxyethyl)-thiazole + ADP + H(+)</text>
        <dbReference type="Rhea" id="RHEA:24212"/>
        <dbReference type="ChEBI" id="CHEBI:15378"/>
        <dbReference type="ChEBI" id="CHEBI:17957"/>
        <dbReference type="ChEBI" id="CHEBI:30616"/>
        <dbReference type="ChEBI" id="CHEBI:58296"/>
        <dbReference type="ChEBI" id="CHEBI:456216"/>
        <dbReference type="EC" id="2.7.1.50"/>
    </reaction>
</comment>
<comment type="cofactor">
    <cofactor evidence="1">
        <name>Mg(2+)</name>
        <dbReference type="ChEBI" id="CHEBI:18420"/>
    </cofactor>
</comment>
<comment type="pathway">
    <text evidence="1">Cofactor biosynthesis; thiamine diphosphate biosynthesis; 4-methyl-5-(2-phosphoethyl)-thiazole from 5-(2-hydroxyethyl)-4-methylthiazole: step 1/1.</text>
</comment>
<comment type="similarity">
    <text evidence="1">Belongs to the Thz kinase family.</text>
</comment>
<dbReference type="EC" id="2.7.1.50" evidence="1"/>
<dbReference type="EMBL" id="CP000085">
    <property type="protein sequence ID" value="ABC34848.1"/>
    <property type="molecule type" value="Genomic_DNA"/>
</dbReference>
<dbReference type="RefSeq" id="WP_009896908.1">
    <property type="nucleotide sequence ID" value="NZ_CP008786.1"/>
</dbReference>
<dbReference type="SMR" id="Q2T5T2"/>
<dbReference type="GeneID" id="45118721"/>
<dbReference type="KEGG" id="bte:BTH_II1271"/>
<dbReference type="HOGENOM" id="CLU_019943_0_1_4"/>
<dbReference type="UniPathway" id="UPA00060">
    <property type="reaction ID" value="UER00139"/>
</dbReference>
<dbReference type="Proteomes" id="UP000001930">
    <property type="component" value="Chromosome II"/>
</dbReference>
<dbReference type="GO" id="GO:0005524">
    <property type="term" value="F:ATP binding"/>
    <property type="evidence" value="ECO:0007669"/>
    <property type="project" value="UniProtKB-UniRule"/>
</dbReference>
<dbReference type="GO" id="GO:0004417">
    <property type="term" value="F:hydroxyethylthiazole kinase activity"/>
    <property type="evidence" value="ECO:0007669"/>
    <property type="project" value="UniProtKB-UniRule"/>
</dbReference>
<dbReference type="GO" id="GO:0000287">
    <property type="term" value="F:magnesium ion binding"/>
    <property type="evidence" value="ECO:0007669"/>
    <property type="project" value="UniProtKB-UniRule"/>
</dbReference>
<dbReference type="GO" id="GO:0009228">
    <property type="term" value="P:thiamine biosynthetic process"/>
    <property type="evidence" value="ECO:0007669"/>
    <property type="project" value="UniProtKB-KW"/>
</dbReference>
<dbReference type="GO" id="GO:0009229">
    <property type="term" value="P:thiamine diphosphate biosynthetic process"/>
    <property type="evidence" value="ECO:0007669"/>
    <property type="project" value="UniProtKB-UniRule"/>
</dbReference>
<dbReference type="Gene3D" id="3.40.1190.20">
    <property type="match status" value="1"/>
</dbReference>
<dbReference type="HAMAP" id="MF_00228">
    <property type="entry name" value="Thz_kinase"/>
    <property type="match status" value="1"/>
</dbReference>
<dbReference type="InterPro" id="IPR000417">
    <property type="entry name" value="Hyethyz_kinase"/>
</dbReference>
<dbReference type="InterPro" id="IPR029056">
    <property type="entry name" value="Ribokinase-like"/>
</dbReference>
<dbReference type="Pfam" id="PF02110">
    <property type="entry name" value="HK"/>
    <property type="match status" value="1"/>
</dbReference>
<dbReference type="PIRSF" id="PIRSF000513">
    <property type="entry name" value="Thz_kinase"/>
    <property type="match status" value="1"/>
</dbReference>
<dbReference type="PRINTS" id="PR01099">
    <property type="entry name" value="HYETHTZKNASE"/>
</dbReference>
<dbReference type="SUPFAM" id="SSF53613">
    <property type="entry name" value="Ribokinase-like"/>
    <property type="match status" value="1"/>
</dbReference>
<evidence type="ECO:0000255" key="1">
    <source>
        <dbReference type="HAMAP-Rule" id="MF_00228"/>
    </source>
</evidence>